<gene>
    <name evidence="1" type="primary">pgk</name>
    <name type="ordered locus">LIC_12091</name>
</gene>
<proteinExistence type="inferred from homology"/>
<dbReference type="EC" id="2.7.2.3" evidence="1"/>
<dbReference type="EMBL" id="AE016823">
    <property type="protein sequence ID" value="AAS70662.1"/>
    <property type="molecule type" value="Genomic_DNA"/>
</dbReference>
<dbReference type="RefSeq" id="WP_000422649.1">
    <property type="nucleotide sequence ID" value="NC_005823.1"/>
</dbReference>
<dbReference type="SMR" id="P62414"/>
<dbReference type="KEGG" id="lic:LIC_12091"/>
<dbReference type="HOGENOM" id="CLU_025427_0_2_12"/>
<dbReference type="UniPathway" id="UPA00109">
    <property type="reaction ID" value="UER00185"/>
</dbReference>
<dbReference type="Proteomes" id="UP000007037">
    <property type="component" value="Chromosome I"/>
</dbReference>
<dbReference type="GO" id="GO:0005829">
    <property type="term" value="C:cytosol"/>
    <property type="evidence" value="ECO:0007669"/>
    <property type="project" value="TreeGrafter"/>
</dbReference>
<dbReference type="GO" id="GO:0043531">
    <property type="term" value="F:ADP binding"/>
    <property type="evidence" value="ECO:0007669"/>
    <property type="project" value="TreeGrafter"/>
</dbReference>
<dbReference type="GO" id="GO:0005524">
    <property type="term" value="F:ATP binding"/>
    <property type="evidence" value="ECO:0007669"/>
    <property type="project" value="UniProtKB-KW"/>
</dbReference>
<dbReference type="GO" id="GO:0004618">
    <property type="term" value="F:phosphoglycerate kinase activity"/>
    <property type="evidence" value="ECO:0007669"/>
    <property type="project" value="UniProtKB-UniRule"/>
</dbReference>
<dbReference type="GO" id="GO:0006094">
    <property type="term" value="P:gluconeogenesis"/>
    <property type="evidence" value="ECO:0007669"/>
    <property type="project" value="TreeGrafter"/>
</dbReference>
<dbReference type="GO" id="GO:0006096">
    <property type="term" value="P:glycolytic process"/>
    <property type="evidence" value="ECO:0007669"/>
    <property type="project" value="UniProtKB-UniRule"/>
</dbReference>
<dbReference type="CDD" id="cd00318">
    <property type="entry name" value="Phosphoglycerate_kinase"/>
    <property type="match status" value="1"/>
</dbReference>
<dbReference type="FunFam" id="3.40.50.1260:FF:000002">
    <property type="entry name" value="Phosphoglycerate kinase"/>
    <property type="match status" value="1"/>
</dbReference>
<dbReference type="FunFam" id="3.40.50.1260:FF:000007">
    <property type="entry name" value="Phosphoglycerate kinase"/>
    <property type="match status" value="1"/>
</dbReference>
<dbReference type="Gene3D" id="3.40.50.1260">
    <property type="entry name" value="Phosphoglycerate kinase, N-terminal domain"/>
    <property type="match status" value="2"/>
</dbReference>
<dbReference type="HAMAP" id="MF_00145">
    <property type="entry name" value="Phosphoglyc_kinase"/>
    <property type="match status" value="1"/>
</dbReference>
<dbReference type="InterPro" id="IPR001576">
    <property type="entry name" value="Phosphoglycerate_kinase"/>
</dbReference>
<dbReference type="InterPro" id="IPR015911">
    <property type="entry name" value="Phosphoglycerate_kinase_CS"/>
</dbReference>
<dbReference type="InterPro" id="IPR015824">
    <property type="entry name" value="Phosphoglycerate_kinase_N"/>
</dbReference>
<dbReference type="InterPro" id="IPR036043">
    <property type="entry name" value="Phosphoglycerate_kinase_sf"/>
</dbReference>
<dbReference type="PANTHER" id="PTHR11406">
    <property type="entry name" value="PHOSPHOGLYCERATE KINASE"/>
    <property type="match status" value="1"/>
</dbReference>
<dbReference type="PANTHER" id="PTHR11406:SF23">
    <property type="entry name" value="PHOSPHOGLYCERATE KINASE 1, CHLOROPLASTIC-RELATED"/>
    <property type="match status" value="1"/>
</dbReference>
<dbReference type="Pfam" id="PF00162">
    <property type="entry name" value="PGK"/>
    <property type="match status" value="1"/>
</dbReference>
<dbReference type="PIRSF" id="PIRSF000724">
    <property type="entry name" value="Pgk"/>
    <property type="match status" value="1"/>
</dbReference>
<dbReference type="PRINTS" id="PR00477">
    <property type="entry name" value="PHGLYCKINASE"/>
</dbReference>
<dbReference type="SUPFAM" id="SSF53748">
    <property type="entry name" value="Phosphoglycerate kinase"/>
    <property type="match status" value="1"/>
</dbReference>
<dbReference type="PROSITE" id="PS00111">
    <property type="entry name" value="PGLYCERATE_KINASE"/>
    <property type="match status" value="1"/>
</dbReference>
<sequence length="396" mass="43002">MELPRLENVDLSGKRVFLRVDFNVPVENGKVTDKTRIEKTLPTIELLIKKGARIIIASHLGRPKGQVNPEFSLAPVVETFQSLVKSKVYFSKTVIGEDAIKLSKELKNGEILVIENVRFHKEEEENDPGFSKKLAALADIYVNDAFGAAHRAHSSTEGIARLLPAYAGLLMHKEILELSALLHKPARPFVAIIGGSKVSTKIKVLTNLFDKVNHLLIGGGMAYTFLKSRAIPIGNSLVEKEFEVQAFQLIEKAGVAGIDLQLPVDHIIGDQFNEKAKTKSVDKMGILDGWMGMDIGSKTVSNYEKIIKNAGTIFWNGPMGVFEMDKFASGTMAIAKAVAKSKAKTVVGGGDSIAAINKARVADKITHISTGGGASLEFMEGRKLPGVEALKKKTSE</sequence>
<comment type="catalytic activity">
    <reaction evidence="1">
        <text>(2R)-3-phosphoglycerate + ATP = (2R)-3-phospho-glyceroyl phosphate + ADP</text>
        <dbReference type="Rhea" id="RHEA:14801"/>
        <dbReference type="ChEBI" id="CHEBI:30616"/>
        <dbReference type="ChEBI" id="CHEBI:57604"/>
        <dbReference type="ChEBI" id="CHEBI:58272"/>
        <dbReference type="ChEBI" id="CHEBI:456216"/>
        <dbReference type="EC" id="2.7.2.3"/>
    </reaction>
</comment>
<comment type="pathway">
    <text evidence="1">Carbohydrate degradation; glycolysis; pyruvate from D-glyceraldehyde 3-phosphate: step 2/5.</text>
</comment>
<comment type="subunit">
    <text evidence="1">Monomer.</text>
</comment>
<comment type="subcellular location">
    <subcellularLocation>
        <location evidence="1">Cytoplasm</location>
    </subcellularLocation>
</comment>
<comment type="similarity">
    <text evidence="1">Belongs to the phosphoglycerate kinase family.</text>
</comment>
<organism>
    <name type="scientific">Leptospira interrogans serogroup Icterohaemorrhagiae serovar copenhageni (strain Fiocruz L1-130)</name>
    <dbReference type="NCBI Taxonomy" id="267671"/>
    <lineage>
        <taxon>Bacteria</taxon>
        <taxon>Pseudomonadati</taxon>
        <taxon>Spirochaetota</taxon>
        <taxon>Spirochaetia</taxon>
        <taxon>Leptospirales</taxon>
        <taxon>Leptospiraceae</taxon>
        <taxon>Leptospira</taxon>
    </lineage>
</organism>
<keyword id="KW-0067">ATP-binding</keyword>
<keyword id="KW-0963">Cytoplasm</keyword>
<keyword id="KW-0324">Glycolysis</keyword>
<keyword id="KW-0418">Kinase</keyword>
<keyword id="KW-0547">Nucleotide-binding</keyword>
<keyword id="KW-0808">Transferase</keyword>
<feature type="chain" id="PRO_0000145958" description="Phosphoglycerate kinase">
    <location>
        <begin position="1"/>
        <end position="396"/>
    </location>
</feature>
<feature type="binding site" evidence="1">
    <location>
        <begin position="21"/>
        <end position="23"/>
    </location>
    <ligand>
        <name>substrate</name>
    </ligand>
</feature>
<feature type="binding site" evidence="1">
    <location>
        <position position="36"/>
    </location>
    <ligand>
        <name>substrate</name>
    </ligand>
</feature>
<feature type="binding site" evidence="1">
    <location>
        <begin position="59"/>
        <end position="62"/>
    </location>
    <ligand>
        <name>substrate</name>
    </ligand>
</feature>
<feature type="binding site" evidence="1">
    <location>
        <position position="118"/>
    </location>
    <ligand>
        <name>substrate</name>
    </ligand>
</feature>
<feature type="binding site" evidence="1">
    <location>
        <position position="151"/>
    </location>
    <ligand>
        <name>substrate</name>
    </ligand>
</feature>
<feature type="binding site" evidence="1">
    <location>
        <position position="201"/>
    </location>
    <ligand>
        <name>ATP</name>
        <dbReference type="ChEBI" id="CHEBI:30616"/>
    </ligand>
</feature>
<feature type="binding site" evidence="1">
    <location>
        <position position="292"/>
    </location>
    <ligand>
        <name>ATP</name>
        <dbReference type="ChEBI" id="CHEBI:30616"/>
    </ligand>
</feature>
<feature type="binding site" evidence="1">
    <location>
        <position position="323"/>
    </location>
    <ligand>
        <name>ATP</name>
        <dbReference type="ChEBI" id="CHEBI:30616"/>
    </ligand>
</feature>
<feature type="binding site" evidence="1">
    <location>
        <begin position="349"/>
        <end position="352"/>
    </location>
    <ligand>
        <name>ATP</name>
        <dbReference type="ChEBI" id="CHEBI:30616"/>
    </ligand>
</feature>
<reference key="1">
    <citation type="journal article" date="2004" name="J. Bacteriol.">
        <title>Comparative genomics of two Leptospira interrogans serovars reveals novel insights into physiology and pathogenesis.</title>
        <authorList>
            <person name="Nascimento A.L.T.O."/>
            <person name="Ko A.I."/>
            <person name="Martins E.A.L."/>
            <person name="Monteiro-Vitorello C.B."/>
            <person name="Ho P.L."/>
            <person name="Haake D.A."/>
            <person name="Verjovski-Almeida S."/>
            <person name="Hartskeerl R.A."/>
            <person name="Marques M.V."/>
            <person name="Oliveira M.C."/>
            <person name="Menck C.F.M."/>
            <person name="Leite L.C.C."/>
            <person name="Carrer H."/>
            <person name="Coutinho L.L."/>
            <person name="Degrave W.M."/>
            <person name="Dellagostin O.A."/>
            <person name="El-Dorry H."/>
            <person name="Ferro E.S."/>
            <person name="Ferro M.I.T."/>
            <person name="Furlan L.R."/>
            <person name="Gamberini M."/>
            <person name="Giglioti E.A."/>
            <person name="Goes-Neto A."/>
            <person name="Goldman G.H."/>
            <person name="Goldman M.H.S."/>
            <person name="Harakava R."/>
            <person name="Jeronimo S.M.B."/>
            <person name="Junqueira-de-Azevedo I.L.M."/>
            <person name="Kimura E.T."/>
            <person name="Kuramae E.E."/>
            <person name="Lemos E.G.M."/>
            <person name="Lemos M.V.F."/>
            <person name="Marino C.L."/>
            <person name="Nunes L.R."/>
            <person name="de Oliveira R.C."/>
            <person name="Pereira G.G."/>
            <person name="Reis M.S."/>
            <person name="Schriefer A."/>
            <person name="Siqueira W.J."/>
            <person name="Sommer P."/>
            <person name="Tsai S.M."/>
            <person name="Simpson A.J.G."/>
            <person name="Ferro J.A."/>
            <person name="Camargo L.E.A."/>
            <person name="Kitajima J.P."/>
            <person name="Setubal J.C."/>
            <person name="Van Sluys M.A."/>
        </authorList>
    </citation>
    <scope>NUCLEOTIDE SEQUENCE [LARGE SCALE GENOMIC DNA]</scope>
    <source>
        <strain>Fiocruz L1-130</strain>
    </source>
</reference>
<name>PGK_LEPIC</name>
<evidence type="ECO:0000255" key="1">
    <source>
        <dbReference type="HAMAP-Rule" id="MF_00145"/>
    </source>
</evidence>
<protein>
    <recommendedName>
        <fullName evidence="1">Phosphoglycerate kinase</fullName>
        <ecNumber evidence="1">2.7.2.3</ecNumber>
    </recommendedName>
</protein>
<accession>P62414</accession>